<gene>
    <name evidence="1" type="primary">rpsJ</name>
    <name type="ordered locus">CPS_0874</name>
</gene>
<organism>
    <name type="scientific">Colwellia psychrerythraea (strain 34H / ATCC BAA-681)</name>
    <name type="common">Vibrio psychroerythus</name>
    <dbReference type="NCBI Taxonomy" id="167879"/>
    <lineage>
        <taxon>Bacteria</taxon>
        <taxon>Pseudomonadati</taxon>
        <taxon>Pseudomonadota</taxon>
        <taxon>Gammaproteobacteria</taxon>
        <taxon>Alteromonadales</taxon>
        <taxon>Colwelliaceae</taxon>
        <taxon>Colwellia</taxon>
    </lineage>
</organism>
<name>RS10_COLP3</name>
<accession>Q487Z2</accession>
<reference key="1">
    <citation type="journal article" date="2005" name="Proc. Natl. Acad. Sci. U.S.A.">
        <title>The psychrophilic lifestyle as revealed by the genome sequence of Colwellia psychrerythraea 34H through genomic and proteomic analyses.</title>
        <authorList>
            <person name="Methe B.A."/>
            <person name="Nelson K.E."/>
            <person name="Deming J.W."/>
            <person name="Momen B."/>
            <person name="Melamud E."/>
            <person name="Zhang X."/>
            <person name="Moult J."/>
            <person name="Madupu R."/>
            <person name="Nelson W.C."/>
            <person name="Dodson R.J."/>
            <person name="Brinkac L.M."/>
            <person name="Daugherty S.C."/>
            <person name="Durkin A.S."/>
            <person name="DeBoy R.T."/>
            <person name="Kolonay J.F."/>
            <person name="Sullivan S.A."/>
            <person name="Zhou L."/>
            <person name="Davidsen T.M."/>
            <person name="Wu M."/>
            <person name="Huston A.L."/>
            <person name="Lewis M."/>
            <person name="Weaver B."/>
            <person name="Weidman J.F."/>
            <person name="Khouri H."/>
            <person name="Utterback T.R."/>
            <person name="Feldblyum T.V."/>
            <person name="Fraser C.M."/>
        </authorList>
    </citation>
    <scope>NUCLEOTIDE SEQUENCE [LARGE SCALE GENOMIC DNA]</scope>
    <source>
        <strain>34H / ATCC BAA-681</strain>
    </source>
</reference>
<comment type="function">
    <text evidence="1">Involved in the binding of tRNA to the ribosomes.</text>
</comment>
<comment type="subunit">
    <text evidence="1">Part of the 30S ribosomal subunit.</text>
</comment>
<comment type="similarity">
    <text evidence="1">Belongs to the universal ribosomal protein uS10 family.</text>
</comment>
<keyword id="KW-0687">Ribonucleoprotein</keyword>
<keyword id="KW-0689">Ribosomal protein</keyword>
<sequence>MSNQRIRIRLKAFDHRLIDQSTAEIVDTAKRTGAQVRGPIPLPTRKERYTILTSPHVNKDARDQYEIRTHKRMIDIVEPTEKTVDALMRLDLAAGVDVQISLG</sequence>
<dbReference type="EMBL" id="CP000083">
    <property type="protein sequence ID" value="AAZ24276.1"/>
    <property type="molecule type" value="Genomic_DNA"/>
</dbReference>
<dbReference type="RefSeq" id="WP_011041723.1">
    <property type="nucleotide sequence ID" value="NC_003910.7"/>
</dbReference>
<dbReference type="SMR" id="Q487Z2"/>
<dbReference type="STRING" id="167879.CPS_0874"/>
<dbReference type="KEGG" id="cps:CPS_0874"/>
<dbReference type="eggNOG" id="COG0051">
    <property type="taxonomic scope" value="Bacteria"/>
</dbReference>
<dbReference type="HOGENOM" id="CLU_122625_1_3_6"/>
<dbReference type="Proteomes" id="UP000000547">
    <property type="component" value="Chromosome"/>
</dbReference>
<dbReference type="GO" id="GO:1990904">
    <property type="term" value="C:ribonucleoprotein complex"/>
    <property type="evidence" value="ECO:0007669"/>
    <property type="project" value="UniProtKB-KW"/>
</dbReference>
<dbReference type="GO" id="GO:0005840">
    <property type="term" value="C:ribosome"/>
    <property type="evidence" value="ECO:0007669"/>
    <property type="project" value="UniProtKB-KW"/>
</dbReference>
<dbReference type="GO" id="GO:0003735">
    <property type="term" value="F:structural constituent of ribosome"/>
    <property type="evidence" value="ECO:0007669"/>
    <property type="project" value="InterPro"/>
</dbReference>
<dbReference type="GO" id="GO:0000049">
    <property type="term" value="F:tRNA binding"/>
    <property type="evidence" value="ECO:0007669"/>
    <property type="project" value="UniProtKB-UniRule"/>
</dbReference>
<dbReference type="GO" id="GO:0006412">
    <property type="term" value="P:translation"/>
    <property type="evidence" value="ECO:0007669"/>
    <property type="project" value="UniProtKB-UniRule"/>
</dbReference>
<dbReference type="FunFam" id="3.30.70.600:FF:000001">
    <property type="entry name" value="30S ribosomal protein S10"/>
    <property type="match status" value="1"/>
</dbReference>
<dbReference type="Gene3D" id="3.30.70.600">
    <property type="entry name" value="Ribosomal protein S10 domain"/>
    <property type="match status" value="1"/>
</dbReference>
<dbReference type="HAMAP" id="MF_00508">
    <property type="entry name" value="Ribosomal_uS10"/>
    <property type="match status" value="1"/>
</dbReference>
<dbReference type="InterPro" id="IPR001848">
    <property type="entry name" value="Ribosomal_uS10"/>
</dbReference>
<dbReference type="InterPro" id="IPR018268">
    <property type="entry name" value="Ribosomal_uS10_CS"/>
</dbReference>
<dbReference type="InterPro" id="IPR027486">
    <property type="entry name" value="Ribosomal_uS10_dom"/>
</dbReference>
<dbReference type="InterPro" id="IPR036838">
    <property type="entry name" value="Ribosomal_uS10_dom_sf"/>
</dbReference>
<dbReference type="NCBIfam" id="NF001861">
    <property type="entry name" value="PRK00596.1"/>
    <property type="match status" value="1"/>
</dbReference>
<dbReference type="NCBIfam" id="TIGR01049">
    <property type="entry name" value="rpsJ_bact"/>
    <property type="match status" value="1"/>
</dbReference>
<dbReference type="PANTHER" id="PTHR11700">
    <property type="entry name" value="30S RIBOSOMAL PROTEIN S10 FAMILY MEMBER"/>
    <property type="match status" value="1"/>
</dbReference>
<dbReference type="Pfam" id="PF00338">
    <property type="entry name" value="Ribosomal_S10"/>
    <property type="match status" value="1"/>
</dbReference>
<dbReference type="PRINTS" id="PR00971">
    <property type="entry name" value="RIBOSOMALS10"/>
</dbReference>
<dbReference type="SMART" id="SM01403">
    <property type="entry name" value="Ribosomal_S10"/>
    <property type="match status" value="1"/>
</dbReference>
<dbReference type="SUPFAM" id="SSF54999">
    <property type="entry name" value="Ribosomal protein S10"/>
    <property type="match status" value="1"/>
</dbReference>
<dbReference type="PROSITE" id="PS00361">
    <property type="entry name" value="RIBOSOMAL_S10"/>
    <property type="match status" value="1"/>
</dbReference>
<proteinExistence type="inferred from homology"/>
<feature type="chain" id="PRO_0000237033" description="Small ribosomal subunit protein uS10">
    <location>
        <begin position="1"/>
        <end position="103"/>
    </location>
</feature>
<evidence type="ECO:0000255" key="1">
    <source>
        <dbReference type="HAMAP-Rule" id="MF_00508"/>
    </source>
</evidence>
<evidence type="ECO:0000305" key="2"/>
<protein>
    <recommendedName>
        <fullName evidence="1">Small ribosomal subunit protein uS10</fullName>
    </recommendedName>
    <alternativeName>
        <fullName evidence="2">30S ribosomal protein S10</fullName>
    </alternativeName>
</protein>